<keyword id="KW-0227">DNA damage</keyword>
<keyword id="KW-0234">DNA repair</keyword>
<keyword id="KW-0235">DNA replication</keyword>
<keyword id="KW-0436">Ligase</keyword>
<keyword id="KW-0460">Magnesium</keyword>
<keyword id="KW-0464">Manganese</keyword>
<keyword id="KW-0479">Metal-binding</keyword>
<keyword id="KW-0520">NAD</keyword>
<keyword id="KW-1185">Reference proteome</keyword>
<keyword id="KW-0862">Zinc</keyword>
<protein>
    <recommendedName>
        <fullName evidence="1">DNA ligase</fullName>
        <ecNumber evidence="1">6.5.1.2</ecNumber>
    </recommendedName>
    <alternativeName>
        <fullName evidence="1">Polydeoxyribonucleotide synthase [NAD(+)]</fullName>
    </alternativeName>
</protein>
<reference key="1">
    <citation type="journal article" date="2002" name="Nucleic Acids Res.">
        <title>Genome sequence of Oceanobacillus iheyensis isolated from the Iheya Ridge and its unexpected adaptive capabilities to extreme environments.</title>
        <authorList>
            <person name="Takami H."/>
            <person name="Takaki Y."/>
            <person name="Uchiyama I."/>
        </authorList>
    </citation>
    <scope>NUCLEOTIDE SEQUENCE [LARGE SCALE GENOMIC DNA]</scope>
    <source>
        <strain>DSM 14371 / CIP 107618 / JCM 11309 / KCTC 3954 / HTE831</strain>
    </source>
</reference>
<feature type="chain" id="PRO_0000313346" description="DNA ligase">
    <location>
        <begin position="1"/>
        <end position="667"/>
    </location>
</feature>
<feature type="domain" description="BRCT" evidence="1">
    <location>
        <begin position="589"/>
        <end position="667"/>
    </location>
</feature>
<feature type="active site" description="N6-AMP-lysine intermediate" evidence="1">
    <location>
        <position position="115"/>
    </location>
</feature>
<feature type="binding site" evidence="1">
    <location>
        <begin position="34"/>
        <end position="38"/>
    </location>
    <ligand>
        <name>NAD(+)</name>
        <dbReference type="ChEBI" id="CHEBI:57540"/>
    </ligand>
</feature>
<feature type="binding site" evidence="1">
    <location>
        <begin position="83"/>
        <end position="84"/>
    </location>
    <ligand>
        <name>NAD(+)</name>
        <dbReference type="ChEBI" id="CHEBI:57540"/>
    </ligand>
</feature>
<feature type="binding site" evidence="1">
    <location>
        <position position="113"/>
    </location>
    <ligand>
        <name>NAD(+)</name>
        <dbReference type="ChEBI" id="CHEBI:57540"/>
    </ligand>
</feature>
<feature type="binding site" evidence="1">
    <location>
        <position position="136"/>
    </location>
    <ligand>
        <name>NAD(+)</name>
        <dbReference type="ChEBI" id="CHEBI:57540"/>
    </ligand>
</feature>
<feature type="binding site" evidence="1">
    <location>
        <position position="170"/>
    </location>
    <ligand>
        <name>NAD(+)</name>
        <dbReference type="ChEBI" id="CHEBI:57540"/>
    </ligand>
</feature>
<feature type="binding site" evidence="1">
    <location>
        <position position="286"/>
    </location>
    <ligand>
        <name>NAD(+)</name>
        <dbReference type="ChEBI" id="CHEBI:57540"/>
    </ligand>
</feature>
<feature type="binding site" evidence="1">
    <location>
        <position position="310"/>
    </location>
    <ligand>
        <name>NAD(+)</name>
        <dbReference type="ChEBI" id="CHEBI:57540"/>
    </ligand>
</feature>
<feature type="binding site" evidence="1">
    <location>
        <position position="404"/>
    </location>
    <ligand>
        <name>Zn(2+)</name>
        <dbReference type="ChEBI" id="CHEBI:29105"/>
    </ligand>
</feature>
<feature type="binding site" evidence="1">
    <location>
        <position position="407"/>
    </location>
    <ligand>
        <name>Zn(2+)</name>
        <dbReference type="ChEBI" id="CHEBI:29105"/>
    </ligand>
</feature>
<feature type="binding site" evidence="1">
    <location>
        <position position="422"/>
    </location>
    <ligand>
        <name>Zn(2+)</name>
        <dbReference type="ChEBI" id="CHEBI:29105"/>
    </ligand>
</feature>
<feature type="binding site" evidence="1">
    <location>
        <position position="427"/>
    </location>
    <ligand>
        <name>Zn(2+)</name>
        <dbReference type="ChEBI" id="CHEBI:29105"/>
    </ligand>
</feature>
<accession>Q8CXK6</accession>
<proteinExistence type="inferred from homology"/>
<sequence length="667" mass="74918">MNKEQVSKKIESLIELLNQYGYEYYVLDNPTVPDAEYDQKLRELQQLEQDFPDLVMENSPTQRVGGAPLASFQKVTHNVPMLSLGNAFNEQDLRDFARRASNGTDQPISFVCELKIDGLAISLTYENGKFVRGATRGDGTIGEDITSNLKTIRSIPLSIKEQGTLEVRGEAYMPHKSFLALNELREKNEEEPFANPRNAAAGSLRQLDPKIAAKRNLDIFLYGVGEWENSDLTSHSEHLTRLKELGFKTNKEWKKCNTIDEVIEYVNYWTEHRNDLSYEIDGIVIKVDSLDQQEELGFTAKSPRWAIAYKFPAEEAMTTLRDIELSIGRTGVVTPTAILDPVRVAGTTVQRASLHNEDLIREQDIRIGDKVVIKKAGDIIPKVVRSVVEQRNGDEQEFHMPDECPACGNELVRLEEEVALRCINPNCPAQLMEGLIHFVSRNAMNIDGLGEKVIIQLFQENLVQTMADLYRLDKEELLQLERMGEKSVTNLLEAIEKSKENSLERLLFGLGIRFIGSKAAKTLAMEFETMENLQKATYEDVLAIDEIGDKMADSIVQYFAEEKVTELLSNLRELGVQMEYKGPRKSEQATDSVLSGKTVVLTGKMEKFSRKEAKEIIESLGGTVTGSVSKKTDIVIAGEDAGSKLDKAEKLGIDVWSEQQLEDVVGK</sequence>
<comment type="function">
    <text evidence="1">DNA ligase that catalyzes the formation of phosphodiester linkages between 5'-phosphoryl and 3'-hydroxyl groups in double-stranded DNA using NAD as a coenzyme and as the energy source for the reaction. It is essential for DNA replication and repair of damaged DNA.</text>
</comment>
<comment type="catalytic activity">
    <reaction evidence="1">
        <text>NAD(+) + (deoxyribonucleotide)n-3'-hydroxyl + 5'-phospho-(deoxyribonucleotide)m = (deoxyribonucleotide)n+m + AMP + beta-nicotinamide D-nucleotide.</text>
        <dbReference type="EC" id="6.5.1.2"/>
    </reaction>
</comment>
<comment type="cofactor">
    <cofactor evidence="1">
        <name>Mg(2+)</name>
        <dbReference type="ChEBI" id="CHEBI:18420"/>
    </cofactor>
    <cofactor evidence="1">
        <name>Mn(2+)</name>
        <dbReference type="ChEBI" id="CHEBI:29035"/>
    </cofactor>
</comment>
<comment type="similarity">
    <text evidence="1">Belongs to the NAD-dependent DNA ligase family. LigA subfamily.</text>
</comment>
<evidence type="ECO:0000255" key="1">
    <source>
        <dbReference type="HAMAP-Rule" id="MF_01588"/>
    </source>
</evidence>
<organism>
    <name type="scientific">Oceanobacillus iheyensis (strain DSM 14371 / CIP 107618 / JCM 11309 / KCTC 3954 / HTE831)</name>
    <dbReference type="NCBI Taxonomy" id="221109"/>
    <lineage>
        <taxon>Bacteria</taxon>
        <taxon>Bacillati</taxon>
        <taxon>Bacillota</taxon>
        <taxon>Bacilli</taxon>
        <taxon>Bacillales</taxon>
        <taxon>Bacillaceae</taxon>
        <taxon>Oceanobacillus</taxon>
    </lineage>
</organism>
<gene>
    <name evidence="1" type="primary">ligA</name>
    <name type="ordered locus">OB0760</name>
</gene>
<name>DNLJ_OCEIH</name>
<dbReference type="EC" id="6.5.1.2" evidence="1"/>
<dbReference type="EMBL" id="BA000028">
    <property type="protein sequence ID" value="BAC12716.1"/>
    <property type="molecule type" value="Genomic_DNA"/>
</dbReference>
<dbReference type="RefSeq" id="WP_011065168.1">
    <property type="nucleotide sequence ID" value="NC_004193.1"/>
</dbReference>
<dbReference type="SMR" id="Q8CXK6"/>
<dbReference type="STRING" id="221109.gene:10732981"/>
<dbReference type="KEGG" id="oih:OB0760"/>
<dbReference type="eggNOG" id="COG0272">
    <property type="taxonomic scope" value="Bacteria"/>
</dbReference>
<dbReference type="HOGENOM" id="CLU_007764_2_1_9"/>
<dbReference type="OrthoDB" id="9759736at2"/>
<dbReference type="PhylomeDB" id="Q8CXK6"/>
<dbReference type="Proteomes" id="UP000000822">
    <property type="component" value="Chromosome"/>
</dbReference>
<dbReference type="GO" id="GO:0005829">
    <property type="term" value="C:cytosol"/>
    <property type="evidence" value="ECO:0007669"/>
    <property type="project" value="TreeGrafter"/>
</dbReference>
<dbReference type="GO" id="GO:0003677">
    <property type="term" value="F:DNA binding"/>
    <property type="evidence" value="ECO:0007669"/>
    <property type="project" value="InterPro"/>
</dbReference>
<dbReference type="GO" id="GO:0003911">
    <property type="term" value="F:DNA ligase (NAD+) activity"/>
    <property type="evidence" value="ECO:0007669"/>
    <property type="project" value="UniProtKB-UniRule"/>
</dbReference>
<dbReference type="GO" id="GO:0046872">
    <property type="term" value="F:metal ion binding"/>
    <property type="evidence" value="ECO:0007669"/>
    <property type="project" value="UniProtKB-KW"/>
</dbReference>
<dbReference type="GO" id="GO:0006281">
    <property type="term" value="P:DNA repair"/>
    <property type="evidence" value="ECO:0007669"/>
    <property type="project" value="UniProtKB-KW"/>
</dbReference>
<dbReference type="GO" id="GO:0006260">
    <property type="term" value="P:DNA replication"/>
    <property type="evidence" value="ECO:0007669"/>
    <property type="project" value="UniProtKB-KW"/>
</dbReference>
<dbReference type="CDD" id="cd17748">
    <property type="entry name" value="BRCT_DNA_ligase_like"/>
    <property type="match status" value="1"/>
</dbReference>
<dbReference type="CDD" id="cd00114">
    <property type="entry name" value="LIGANc"/>
    <property type="match status" value="1"/>
</dbReference>
<dbReference type="FunFam" id="1.10.150.20:FF:000006">
    <property type="entry name" value="DNA ligase"/>
    <property type="match status" value="1"/>
</dbReference>
<dbReference type="FunFam" id="1.10.150.20:FF:000007">
    <property type="entry name" value="DNA ligase"/>
    <property type="match status" value="1"/>
</dbReference>
<dbReference type="FunFam" id="1.10.287.610:FF:000002">
    <property type="entry name" value="DNA ligase"/>
    <property type="match status" value="1"/>
</dbReference>
<dbReference type="FunFam" id="2.40.50.140:FF:000012">
    <property type="entry name" value="DNA ligase"/>
    <property type="match status" value="1"/>
</dbReference>
<dbReference type="FunFam" id="3.30.470.30:FF:000001">
    <property type="entry name" value="DNA ligase"/>
    <property type="match status" value="1"/>
</dbReference>
<dbReference type="Gene3D" id="6.20.10.30">
    <property type="match status" value="1"/>
</dbReference>
<dbReference type="Gene3D" id="1.10.150.20">
    <property type="entry name" value="5' to 3' exonuclease, C-terminal subdomain"/>
    <property type="match status" value="2"/>
</dbReference>
<dbReference type="Gene3D" id="3.40.50.10190">
    <property type="entry name" value="BRCT domain"/>
    <property type="match status" value="1"/>
</dbReference>
<dbReference type="Gene3D" id="3.30.470.30">
    <property type="entry name" value="DNA ligase/mRNA capping enzyme"/>
    <property type="match status" value="1"/>
</dbReference>
<dbReference type="Gene3D" id="1.10.287.610">
    <property type="entry name" value="Helix hairpin bin"/>
    <property type="match status" value="1"/>
</dbReference>
<dbReference type="Gene3D" id="2.40.50.140">
    <property type="entry name" value="Nucleic acid-binding proteins"/>
    <property type="match status" value="1"/>
</dbReference>
<dbReference type="HAMAP" id="MF_01588">
    <property type="entry name" value="DNA_ligase_A"/>
    <property type="match status" value="1"/>
</dbReference>
<dbReference type="InterPro" id="IPR001357">
    <property type="entry name" value="BRCT_dom"/>
</dbReference>
<dbReference type="InterPro" id="IPR036420">
    <property type="entry name" value="BRCT_dom_sf"/>
</dbReference>
<dbReference type="InterPro" id="IPR041663">
    <property type="entry name" value="DisA/LigA_HHH"/>
</dbReference>
<dbReference type="InterPro" id="IPR001679">
    <property type="entry name" value="DNA_ligase"/>
</dbReference>
<dbReference type="InterPro" id="IPR018239">
    <property type="entry name" value="DNA_ligase_AS"/>
</dbReference>
<dbReference type="InterPro" id="IPR033136">
    <property type="entry name" value="DNA_ligase_CS"/>
</dbReference>
<dbReference type="InterPro" id="IPR013839">
    <property type="entry name" value="DNAligase_adenylation"/>
</dbReference>
<dbReference type="InterPro" id="IPR013840">
    <property type="entry name" value="DNAligase_N"/>
</dbReference>
<dbReference type="InterPro" id="IPR003583">
    <property type="entry name" value="Hlx-hairpin-Hlx_DNA-bd_motif"/>
</dbReference>
<dbReference type="InterPro" id="IPR012340">
    <property type="entry name" value="NA-bd_OB-fold"/>
</dbReference>
<dbReference type="InterPro" id="IPR004150">
    <property type="entry name" value="NAD_DNA_ligase_OB"/>
</dbReference>
<dbReference type="InterPro" id="IPR010994">
    <property type="entry name" value="RuvA_2-like"/>
</dbReference>
<dbReference type="InterPro" id="IPR004149">
    <property type="entry name" value="Znf_DNAligase_C4"/>
</dbReference>
<dbReference type="NCBIfam" id="TIGR00575">
    <property type="entry name" value="dnlj"/>
    <property type="match status" value="1"/>
</dbReference>
<dbReference type="NCBIfam" id="NF005932">
    <property type="entry name" value="PRK07956.1"/>
    <property type="match status" value="1"/>
</dbReference>
<dbReference type="PANTHER" id="PTHR23389">
    <property type="entry name" value="CHROMOSOME TRANSMISSION FIDELITY FACTOR 18"/>
    <property type="match status" value="1"/>
</dbReference>
<dbReference type="PANTHER" id="PTHR23389:SF9">
    <property type="entry name" value="DNA LIGASE"/>
    <property type="match status" value="1"/>
</dbReference>
<dbReference type="Pfam" id="PF00533">
    <property type="entry name" value="BRCT"/>
    <property type="match status" value="1"/>
</dbReference>
<dbReference type="Pfam" id="PF01653">
    <property type="entry name" value="DNA_ligase_aden"/>
    <property type="match status" value="1"/>
</dbReference>
<dbReference type="Pfam" id="PF03120">
    <property type="entry name" value="DNA_ligase_OB"/>
    <property type="match status" value="1"/>
</dbReference>
<dbReference type="Pfam" id="PF03119">
    <property type="entry name" value="DNA_ligase_ZBD"/>
    <property type="match status" value="1"/>
</dbReference>
<dbReference type="Pfam" id="PF12826">
    <property type="entry name" value="HHH_2"/>
    <property type="match status" value="1"/>
</dbReference>
<dbReference type="Pfam" id="PF14520">
    <property type="entry name" value="HHH_5"/>
    <property type="match status" value="1"/>
</dbReference>
<dbReference type="PIRSF" id="PIRSF001604">
    <property type="entry name" value="LigA"/>
    <property type="match status" value="1"/>
</dbReference>
<dbReference type="SMART" id="SM00292">
    <property type="entry name" value="BRCT"/>
    <property type="match status" value="1"/>
</dbReference>
<dbReference type="SMART" id="SM00278">
    <property type="entry name" value="HhH1"/>
    <property type="match status" value="3"/>
</dbReference>
<dbReference type="SMART" id="SM00532">
    <property type="entry name" value="LIGANc"/>
    <property type="match status" value="1"/>
</dbReference>
<dbReference type="SUPFAM" id="SSF52113">
    <property type="entry name" value="BRCT domain"/>
    <property type="match status" value="1"/>
</dbReference>
<dbReference type="SUPFAM" id="SSF56091">
    <property type="entry name" value="DNA ligase/mRNA capping enzyme, catalytic domain"/>
    <property type="match status" value="1"/>
</dbReference>
<dbReference type="SUPFAM" id="SSF50249">
    <property type="entry name" value="Nucleic acid-binding proteins"/>
    <property type="match status" value="1"/>
</dbReference>
<dbReference type="SUPFAM" id="SSF47781">
    <property type="entry name" value="RuvA domain 2-like"/>
    <property type="match status" value="1"/>
</dbReference>
<dbReference type="PROSITE" id="PS50172">
    <property type="entry name" value="BRCT"/>
    <property type="match status" value="1"/>
</dbReference>
<dbReference type="PROSITE" id="PS01055">
    <property type="entry name" value="DNA_LIGASE_N1"/>
    <property type="match status" value="1"/>
</dbReference>
<dbReference type="PROSITE" id="PS01056">
    <property type="entry name" value="DNA_LIGASE_N2"/>
    <property type="match status" value="1"/>
</dbReference>